<sequence length="92" mass="10460">MSVEEISEKLKVDKLAICSDEISTVGLEPDLAAELKELIYVLVPAESFQGYLAVDGQYVVFRRDSRKCVLAIVEEERVRWCLRRLEEVLNGS</sequence>
<accession>O29990</accession>
<organism>
    <name type="scientific">Archaeoglobus fulgidus (strain ATCC 49558 / DSM 4304 / JCM 9628 / NBRC 100126 / VC-16)</name>
    <dbReference type="NCBI Taxonomy" id="224325"/>
    <lineage>
        <taxon>Archaea</taxon>
        <taxon>Methanobacteriati</taxon>
        <taxon>Methanobacteriota</taxon>
        <taxon>Archaeoglobi</taxon>
        <taxon>Archaeoglobales</taxon>
        <taxon>Archaeoglobaceae</taxon>
        <taxon>Archaeoglobus</taxon>
    </lineage>
</organism>
<keyword id="KW-1185">Reference proteome</keyword>
<feature type="chain" id="PRO_0000127852" description="Uncharacterized protein AF_0249">
    <location>
        <begin position="1"/>
        <end position="92"/>
    </location>
</feature>
<dbReference type="EMBL" id="AE000782">
    <property type="protein sequence ID" value="AAB90984.1"/>
    <property type="molecule type" value="Genomic_DNA"/>
</dbReference>
<dbReference type="PIR" id="A69281">
    <property type="entry name" value="A69281"/>
</dbReference>
<dbReference type="RefSeq" id="WP_010877760.1">
    <property type="nucleotide sequence ID" value="NC_000917.1"/>
</dbReference>
<dbReference type="STRING" id="224325.AF_0249"/>
<dbReference type="PaxDb" id="224325-AF_0249"/>
<dbReference type="EnsemblBacteria" id="AAB90984">
    <property type="protein sequence ID" value="AAB90984"/>
    <property type="gene ID" value="AF_0249"/>
</dbReference>
<dbReference type="KEGG" id="afu:AF_0249"/>
<dbReference type="HOGENOM" id="CLU_2406179_0_0_2"/>
<dbReference type="Proteomes" id="UP000002199">
    <property type="component" value="Chromosome"/>
</dbReference>
<proteinExistence type="predicted"/>
<protein>
    <recommendedName>
        <fullName>Uncharacterized protein AF_0249</fullName>
    </recommendedName>
</protein>
<name>Y249_ARCFU</name>
<reference key="1">
    <citation type="journal article" date="1997" name="Nature">
        <title>The complete genome sequence of the hyperthermophilic, sulphate-reducing archaeon Archaeoglobus fulgidus.</title>
        <authorList>
            <person name="Klenk H.-P."/>
            <person name="Clayton R.A."/>
            <person name="Tomb J.-F."/>
            <person name="White O."/>
            <person name="Nelson K.E."/>
            <person name="Ketchum K.A."/>
            <person name="Dodson R.J."/>
            <person name="Gwinn M.L."/>
            <person name="Hickey E.K."/>
            <person name="Peterson J.D."/>
            <person name="Richardson D.L."/>
            <person name="Kerlavage A.R."/>
            <person name="Graham D.E."/>
            <person name="Kyrpides N.C."/>
            <person name="Fleischmann R.D."/>
            <person name="Quackenbush J."/>
            <person name="Lee N.H."/>
            <person name="Sutton G.G."/>
            <person name="Gill S.R."/>
            <person name="Kirkness E.F."/>
            <person name="Dougherty B.A."/>
            <person name="McKenney K."/>
            <person name="Adams M.D."/>
            <person name="Loftus B.J."/>
            <person name="Peterson S.N."/>
            <person name="Reich C.I."/>
            <person name="McNeil L.K."/>
            <person name="Badger J.H."/>
            <person name="Glodek A."/>
            <person name="Zhou L."/>
            <person name="Overbeek R."/>
            <person name="Gocayne J.D."/>
            <person name="Weidman J.F."/>
            <person name="McDonald L.A."/>
            <person name="Utterback T.R."/>
            <person name="Cotton M.D."/>
            <person name="Spriggs T."/>
            <person name="Artiach P."/>
            <person name="Kaine B.P."/>
            <person name="Sykes S.M."/>
            <person name="Sadow P.W."/>
            <person name="D'Andrea K.P."/>
            <person name="Bowman C."/>
            <person name="Fujii C."/>
            <person name="Garland S.A."/>
            <person name="Mason T.M."/>
            <person name="Olsen G.J."/>
            <person name="Fraser C.M."/>
            <person name="Smith H.O."/>
            <person name="Woese C.R."/>
            <person name="Venter J.C."/>
        </authorList>
    </citation>
    <scope>NUCLEOTIDE SEQUENCE [LARGE SCALE GENOMIC DNA]</scope>
    <source>
        <strain>ATCC 49558 / DSM 4304 / JCM 9628 / NBRC 100126 / VC-16</strain>
    </source>
</reference>
<gene>
    <name type="ordered locus">AF_0249</name>
</gene>